<comment type="function">
    <text evidence="1">Synthesizes alpha-1,4-glucan chains using ADP-glucose.</text>
</comment>
<comment type="catalytic activity">
    <reaction evidence="1">
        <text>[(1-&gt;4)-alpha-D-glucosyl](n) + ADP-alpha-D-glucose = [(1-&gt;4)-alpha-D-glucosyl](n+1) + ADP + H(+)</text>
        <dbReference type="Rhea" id="RHEA:18189"/>
        <dbReference type="Rhea" id="RHEA-COMP:9584"/>
        <dbReference type="Rhea" id="RHEA-COMP:9587"/>
        <dbReference type="ChEBI" id="CHEBI:15378"/>
        <dbReference type="ChEBI" id="CHEBI:15444"/>
        <dbReference type="ChEBI" id="CHEBI:57498"/>
        <dbReference type="ChEBI" id="CHEBI:456216"/>
        <dbReference type="EC" id="2.4.1.21"/>
    </reaction>
</comment>
<comment type="pathway">
    <text evidence="1">Glycan biosynthesis; glycogen biosynthesis.</text>
</comment>
<comment type="similarity">
    <text evidence="1">Belongs to the glycosyltransferase 1 family. Bacterial/plant glycogen synthase subfamily.</text>
</comment>
<protein>
    <recommendedName>
        <fullName evidence="1">Glycogen synthase</fullName>
        <ecNumber evidence="1">2.4.1.21</ecNumber>
    </recommendedName>
    <alternativeName>
        <fullName evidence="1">Starch [bacterial glycogen] synthase</fullName>
    </alternativeName>
</protein>
<accession>A3CM04</accession>
<keyword id="KW-0320">Glycogen biosynthesis</keyword>
<keyword id="KW-0328">Glycosyltransferase</keyword>
<keyword id="KW-1185">Reference proteome</keyword>
<keyword id="KW-0808">Transferase</keyword>
<feature type="chain" id="PRO_1000014385" description="Glycogen synthase">
    <location>
        <begin position="1"/>
        <end position="476"/>
    </location>
</feature>
<feature type="binding site" evidence="1">
    <location>
        <position position="15"/>
    </location>
    <ligand>
        <name>ADP-alpha-D-glucose</name>
        <dbReference type="ChEBI" id="CHEBI:57498"/>
    </ligand>
</feature>
<reference key="1">
    <citation type="journal article" date="2007" name="J. Bacteriol.">
        <title>Genome of the opportunistic pathogen Streptococcus sanguinis.</title>
        <authorList>
            <person name="Xu P."/>
            <person name="Alves J.M."/>
            <person name="Kitten T."/>
            <person name="Brown A."/>
            <person name="Chen Z."/>
            <person name="Ozaki L.S."/>
            <person name="Manque P."/>
            <person name="Ge X."/>
            <person name="Serrano M.G."/>
            <person name="Puiu D."/>
            <person name="Hendricks S."/>
            <person name="Wang Y."/>
            <person name="Chaplin M.D."/>
            <person name="Akan D."/>
            <person name="Paik S."/>
            <person name="Peterson D.L."/>
            <person name="Macrina F.L."/>
            <person name="Buck G.A."/>
        </authorList>
    </citation>
    <scope>NUCLEOTIDE SEQUENCE [LARGE SCALE GENOMIC DNA]</scope>
    <source>
        <strain>SK36</strain>
    </source>
</reference>
<organism>
    <name type="scientific">Streptococcus sanguinis (strain SK36)</name>
    <dbReference type="NCBI Taxonomy" id="388919"/>
    <lineage>
        <taxon>Bacteria</taxon>
        <taxon>Bacillati</taxon>
        <taxon>Bacillota</taxon>
        <taxon>Bacilli</taxon>
        <taxon>Lactobacillales</taxon>
        <taxon>Streptococcaceae</taxon>
        <taxon>Streptococcus</taxon>
    </lineage>
</organism>
<name>GLGA_STRSV</name>
<evidence type="ECO:0000255" key="1">
    <source>
        <dbReference type="HAMAP-Rule" id="MF_00484"/>
    </source>
</evidence>
<dbReference type="EC" id="2.4.1.21" evidence="1"/>
<dbReference type="EMBL" id="CP000387">
    <property type="protein sequence ID" value="ABN44209.1"/>
    <property type="molecule type" value="Genomic_DNA"/>
</dbReference>
<dbReference type="RefSeq" id="WP_011836716.1">
    <property type="nucleotide sequence ID" value="NC_009009.1"/>
</dbReference>
<dbReference type="RefSeq" id="YP_001034759.1">
    <property type="nucleotide sequence ID" value="NC_009009.1"/>
</dbReference>
<dbReference type="SMR" id="A3CM04"/>
<dbReference type="STRING" id="388919.SSA_0778"/>
<dbReference type="CAZy" id="GT5">
    <property type="family name" value="Glycosyltransferase Family 5"/>
</dbReference>
<dbReference type="KEGG" id="ssa:SSA_0778"/>
<dbReference type="PATRIC" id="fig|388919.9.peg.744"/>
<dbReference type="eggNOG" id="COG0297">
    <property type="taxonomic scope" value="Bacteria"/>
</dbReference>
<dbReference type="HOGENOM" id="CLU_009583_18_2_9"/>
<dbReference type="OrthoDB" id="9808590at2"/>
<dbReference type="UniPathway" id="UPA00164"/>
<dbReference type="Proteomes" id="UP000002148">
    <property type="component" value="Chromosome"/>
</dbReference>
<dbReference type="GO" id="GO:0009011">
    <property type="term" value="F:alpha-1,4-glucan glucosyltransferase (ADP-glucose donor) activity"/>
    <property type="evidence" value="ECO:0007669"/>
    <property type="project" value="UniProtKB-UniRule"/>
</dbReference>
<dbReference type="GO" id="GO:0004373">
    <property type="term" value="F:alpha-1,4-glucan glucosyltransferase (UDP-glucose donor) activity"/>
    <property type="evidence" value="ECO:0007669"/>
    <property type="project" value="InterPro"/>
</dbReference>
<dbReference type="GO" id="GO:0005978">
    <property type="term" value="P:glycogen biosynthetic process"/>
    <property type="evidence" value="ECO:0007669"/>
    <property type="project" value="UniProtKB-UniRule"/>
</dbReference>
<dbReference type="CDD" id="cd03791">
    <property type="entry name" value="GT5_Glycogen_synthase_DULL1-like"/>
    <property type="match status" value="1"/>
</dbReference>
<dbReference type="Gene3D" id="3.40.50.2000">
    <property type="entry name" value="Glycogen Phosphorylase B"/>
    <property type="match status" value="2"/>
</dbReference>
<dbReference type="HAMAP" id="MF_00484">
    <property type="entry name" value="Glycogen_synth"/>
    <property type="match status" value="1"/>
</dbReference>
<dbReference type="InterPro" id="IPR001296">
    <property type="entry name" value="Glyco_trans_1"/>
</dbReference>
<dbReference type="InterPro" id="IPR011835">
    <property type="entry name" value="GS/SS"/>
</dbReference>
<dbReference type="InterPro" id="IPR013534">
    <property type="entry name" value="Starch_synth_cat_dom"/>
</dbReference>
<dbReference type="NCBIfam" id="TIGR02095">
    <property type="entry name" value="glgA"/>
    <property type="match status" value="1"/>
</dbReference>
<dbReference type="NCBIfam" id="NF001898">
    <property type="entry name" value="PRK00654.1-1"/>
    <property type="match status" value="1"/>
</dbReference>
<dbReference type="PANTHER" id="PTHR45825:SF11">
    <property type="entry name" value="ALPHA AMYLASE DOMAIN-CONTAINING PROTEIN"/>
    <property type="match status" value="1"/>
</dbReference>
<dbReference type="PANTHER" id="PTHR45825">
    <property type="entry name" value="GRANULE-BOUND STARCH SYNTHASE 1, CHLOROPLASTIC/AMYLOPLASTIC"/>
    <property type="match status" value="1"/>
</dbReference>
<dbReference type="Pfam" id="PF08323">
    <property type="entry name" value="Glyco_transf_5"/>
    <property type="match status" value="1"/>
</dbReference>
<dbReference type="Pfam" id="PF00534">
    <property type="entry name" value="Glycos_transf_1"/>
    <property type="match status" value="1"/>
</dbReference>
<dbReference type="SUPFAM" id="SSF53756">
    <property type="entry name" value="UDP-Glycosyltransferase/glycogen phosphorylase"/>
    <property type="match status" value="1"/>
</dbReference>
<proteinExistence type="inferred from homology"/>
<gene>
    <name evidence="1" type="primary">glgA</name>
    <name type="ordered locus">SSA_0778</name>
</gene>
<sequence>MKILFAAAEGAPFSKTGGLGDVIGALPKSLVKAGHEVGVILPYYDMTHAKFGDQVEDLFYFEVSVGWRRQYVGVKRLVLNGVSFYFIDNQHYFFRGHVYGDFDDGERFAYFQLAAVELMERIDFIPDVLHVHDYHTAMIPFLVKEKYHWIQAYQNITTVLTIHNLEFQGQFPDSMLWELFGVGYERYADGTLRWNDCLNWMKAGILYADRVTTVSPSYASEIRTPEFGCNLDQILRMESGKLVGIVNGIDTDIYNPETDPLLAHHFDKSDLSGKLENKRALQERVGLPVRDDVPVVGIVSRLTRQKGFDLVVEELHNLLQEDVQIILLGTGDPAFEQAFAWFGHAYPDKLSANILFDVTLAQEIYAASDIFLMPSRFEPCGLSQMMAMRYGTLPLVHEVGGLRDTVEPYNVYTGKGTGFSFNNFSGYWLTWTFKEALKLYADDKEAWKSLQEQAMERDFSWDTASKAYSDLYQSLL</sequence>